<keyword id="KW-0175">Coiled coil</keyword>
<keyword id="KW-0217">Developmental protein</keyword>
<keyword id="KW-0221">Differentiation</keyword>
<keyword id="KW-0479">Metal-binding</keyword>
<keyword id="KW-0539">Nucleus</keyword>
<keyword id="KW-1185">Reference proteome</keyword>
<keyword id="KW-0943">RNA-mediated gene silencing</keyword>
<keyword id="KW-0744">Spermatogenesis</keyword>
<keyword id="KW-0862">Zinc</keyword>
<keyword id="KW-0863">Zinc-finger</keyword>
<organism>
    <name type="scientific">Mus musculus</name>
    <name type="common">Mouse</name>
    <dbReference type="NCBI Taxonomy" id="10090"/>
    <lineage>
        <taxon>Eukaryota</taxon>
        <taxon>Metazoa</taxon>
        <taxon>Chordata</taxon>
        <taxon>Craniata</taxon>
        <taxon>Vertebrata</taxon>
        <taxon>Euteleostomi</taxon>
        <taxon>Mammalia</taxon>
        <taxon>Eutheria</taxon>
        <taxon>Euarchontoglires</taxon>
        <taxon>Glires</taxon>
        <taxon>Rodentia</taxon>
        <taxon>Myomorpha</taxon>
        <taxon>Muroidea</taxon>
        <taxon>Muridae</taxon>
        <taxon>Murinae</taxon>
        <taxon>Mus</taxon>
        <taxon>Mus</taxon>
    </lineage>
</organism>
<feature type="chain" id="PRO_0000248242" description="MORC family CW-type zinc finger protein 1">
    <location>
        <begin position="1"/>
        <end position="950"/>
    </location>
</feature>
<feature type="zinc finger region" description="CW-type" evidence="2">
    <location>
        <begin position="465"/>
        <end position="530"/>
    </location>
</feature>
<feature type="region of interest" description="Disordered" evidence="3">
    <location>
        <begin position="532"/>
        <end position="551"/>
    </location>
</feature>
<feature type="region of interest" description="Disordered" evidence="3">
    <location>
        <begin position="679"/>
        <end position="700"/>
    </location>
</feature>
<feature type="coiled-coil region" evidence="1">
    <location>
        <begin position="281"/>
        <end position="342"/>
    </location>
</feature>
<feature type="coiled-coil region" evidence="1">
    <location>
        <begin position="885"/>
        <end position="916"/>
    </location>
</feature>
<feature type="compositionally biased region" description="Basic and acidic residues" evidence="3">
    <location>
        <begin position="541"/>
        <end position="550"/>
    </location>
</feature>
<feature type="binding site" evidence="2">
    <location>
        <position position="485"/>
    </location>
    <ligand>
        <name>Zn(2+)</name>
        <dbReference type="ChEBI" id="CHEBI:29105"/>
    </ligand>
</feature>
<feature type="binding site" evidence="2">
    <location>
        <position position="488"/>
    </location>
    <ligand>
        <name>Zn(2+)</name>
        <dbReference type="ChEBI" id="CHEBI:29105"/>
    </ligand>
</feature>
<feature type="binding site" evidence="2">
    <location>
        <position position="511"/>
    </location>
    <ligand>
        <name>Zn(2+)</name>
        <dbReference type="ChEBI" id="CHEBI:29105"/>
    </ligand>
</feature>
<feature type="binding site" evidence="2">
    <location>
        <position position="522"/>
    </location>
    <ligand>
        <name>Zn(2+)</name>
        <dbReference type="ChEBI" id="CHEBI:29105"/>
    </ligand>
</feature>
<sequence length="950" mass="108310">MDKYALLQRAKLHLDFIHANSTTHSFLFGALAELLDNARDAGAVRLDVFSVDNETLQGGFMLCFLDDGCGMSPDEASDVIYFGTSKKRLSTLKFIGQYGNGLKSGSMRIGKDCILFTKKEETMTCLFFSQTFCEKEGLTEVVVPIPSWLTRTRESITDDPQKFFTELSIIFKYSPFKTEAELMQQFDMIYGRCGTLLIIYNLKLLLSGEPELDVTTDKEDILMAEAPEEIPERRSFRAYTAVLYFEPRMKIFIQAKRVQTKHLCYSLYKPRKYQYTTSSFKGKFKTEVQKAEEAVKRAELLFKEVQAKVNQPDRIALSSTQDALQKALQDVDTKHKSLRQKQRALRKARTLSLFFGVNTEDQHQAGMFIYSNNRLIKMYEKVGPQLKMKSLLGAGIIGIVNIPLETMEPSHNKQEFLNVQEYNHLLKVMGQYLIQYCKDIGISNRNLTLFWDEFKYQHSKDTDSSLESLQWRRRQAMGIPFILQCDLCLKWRVLPSSSNYQEKGLPDLWICASNPNNLENSCNQIERLPSIPLGTVNRRPPSKDERERQLQESVQRYQDKLVEAQPQKSQLIVTSKIPEFKSSCLSSALKEKSKLGRIQPSGADLTQGSPSSVKLSFMQRSQKRSTEDTHSDVEFICMTKIPKKSVKKTVKYLQPGHAPALLENLKLEDTAQVSSREIKKQQSESLVQAGKASTDVASSRDPTVTMVWDQSSTKVSLKQEEEEEVPLIKPDKQELCDDTPVVKGNSSALHWKSLPGVQMEDLSPRSGHKINSVSGDCQLPASPMPSQSMSVEETARKLLSNLREILLYFVPEFQLSSEFECTSVEELITNPELERCPENINEKLKTCFNQIQNIYMAQYEKRLKRKMQSIVYEANRRGLLNQVFLGQCELKRKRTEEKLSDLRAKLALLLQKLQLGGPAGDPQQIDAYLEDLLKEDRLPTALHEKSPESA</sequence>
<protein>
    <recommendedName>
        <fullName>MORC family CW-type zinc finger protein 1</fullName>
    </recommendedName>
    <alternativeName>
        <fullName>Protein microrchidia</fullName>
    </alternativeName>
</protein>
<dbReference type="EMBL" id="AF084945">
    <property type="protein sequence ID" value="AAD43003.1"/>
    <property type="molecule type" value="mRNA"/>
</dbReference>
<dbReference type="EMBL" id="BC030893">
    <property type="protein sequence ID" value="AAH30893.1"/>
    <property type="molecule type" value="mRNA"/>
</dbReference>
<dbReference type="CCDS" id="CCDS37351.1"/>
<dbReference type="RefSeq" id="NP_034946.1">
    <property type="nucleotide sequence ID" value="NM_010816.1"/>
</dbReference>
<dbReference type="SMR" id="Q9WVL5"/>
<dbReference type="BioGRID" id="201469">
    <property type="interactions" value="1"/>
</dbReference>
<dbReference type="FunCoup" id="Q9WVL5">
    <property type="interactions" value="235"/>
</dbReference>
<dbReference type="STRING" id="10090.ENSMUSP00000023330"/>
<dbReference type="iPTMnet" id="Q9WVL5"/>
<dbReference type="PhosphoSitePlus" id="Q9WVL5"/>
<dbReference type="jPOST" id="Q9WVL5"/>
<dbReference type="PaxDb" id="10090-ENSMUSP00000023330"/>
<dbReference type="PeptideAtlas" id="Q9WVL5"/>
<dbReference type="ProteomicsDB" id="252592"/>
<dbReference type="Antibodypedia" id="32406">
    <property type="antibodies" value="123 antibodies from 18 providers"/>
</dbReference>
<dbReference type="DNASU" id="17450"/>
<dbReference type="Ensembl" id="ENSMUST00000023330.8">
    <property type="protein sequence ID" value="ENSMUSP00000023330.7"/>
    <property type="gene ID" value="ENSMUSG00000022652.8"/>
</dbReference>
<dbReference type="GeneID" id="17450"/>
<dbReference type="KEGG" id="mmu:17450"/>
<dbReference type="UCSC" id="uc007zjp.1">
    <property type="organism name" value="mouse"/>
</dbReference>
<dbReference type="AGR" id="MGI:1316740"/>
<dbReference type="CTD" id="27136"/>
<dbReference type="MGI" id="MGI:1316740">
    <property type="gene designation" value="Morc1"/>
</dbReference>
<dbReference type="VEuPathDB" id="HostDB:ENSMUSG00000022652"/>
<dbReference type="eggNOG" id="KOG1845">
    <property type="taxonomic scope" value="Eukaryota"/>
</dbReference>
<dbReference type="GeneTree" id="ENSGT00940000153998"/>
<dbReference type="HOGENOM" id="CLU_011516_0_1_1"/>
<dbReference type="InParanoid" id="Q9WVL5"/>
<dbReference type="OMA" id="LDIWICA"/>
<dbReference type="OrthoDB" id="10251809at2759"/>
<dbReference type="PhylomeDB" id="Q9WVL5"/>
<dbReference type="TreeFam" id="TF329118"/>
<dbReference type="BioGRID-ORCS" id="17450">
    <property type="hits" value="2 hits in 75 CRISPR screens"/>
</dbReference>
<dbReference type="ChiTaRS" id="Morc1">
    <property type="organism name" value="mouse"/>
</dbReference>
<dbReference type="PRO" id="PR:Q9WVL5"/>
<dbReference type="Proteomes" id="UP000000589">
    <property type="component" value="Chromosome 16"/>
</dbReference>
<dbReference type="RNAct" id="Q9WVL5">
    <property type="molecule type" value="protein"/>
</dbReference>
<dbReference type="Bgee" id="ENSMUSG00000022652">
    <property type="expression patterns" value="Expressed in otic capsule and 35 other cell types or tissues"/>
</dbReference>
<dbReference type="GO" id="GO:0001673">
    <property type="term" value="C:male germ cell nucleus"/>
    <property type="evidence" value="ECO:0000314"/>
    <property type="project" value="MGI"/>
</dbReference>
<dbReference type="GO" id="GO:0005634">
    <property type="term" value="C:nucleus"/>
    <property type="evidence" value="ECO:0000314"/>
    <property type="project" value="MGI"/>
</dbReference>
<dbReference type="GO" id="GO:0008270">
    <property type="term" value="F:zinc ion binding"/>
    <property type="evidence" value="ECO:0007669"/>
    <property type="project" value="UniProtKB-KW"/>
</dbReference>
<dbReference type="GO" id="GO:0001662">
    <property type="term" value="P:behavioral fear response"/>
    <property type="evidence" value="ECO:0000315"/>
    <property type="project" value="MGI"/>
</dbReference>
<dbReference type="GO" id="GO:0030154">
    <property type="term" value="P:cell differentiation"/>
    <property type="evidence" value="ECO:0007669"/>
    <property type="project" value="UniProtKB-KW"/>
</dbReference>
<dbReference type="GO" id="GO:0044727">
    <property type="term" value="P:epigenetic programing of male pronucleus"/>
    <property type="evidence" value="ECO:0000315"/>
    <property type="project" value="MGI"/>
</dbReference>
<dbReference type="GO" id="GO:0040029">
    <property type="term" value="P:epigenetic regulation of gene expression"/>
    <property type="evidence" value="ECO:0000315"/>
    <property type="project" value="MGI"/>
</dbReference>
<dbReference type="GO" id="GO:2000143">
    <property type="term" value="P:negative regulation of DNA-templated transcription initiation"/>
    <property type="evidence" value="ECO:0000315"/>
    <property type="project" value="MGI"/>
</dbReference>
<dbReference type="GO" id="GO:0010629">
    <property type="term" value="P:negative regulation of gene expression"/>
    <property type="evidence" value="ECO:0000315"/>
    <property type="project" value="MGI"/>
</dbReference>
<dbReference type="GO" id="GO:0031047">
    <property type="term" value="P:regulatory ncRNA-mediated gene silencing"/>
    <property type="evidence" value="ECO:0007669"/>
    <property type="project" value="UniProtKB-KW"/>
</dbReference>
<dbReference type="GO" id="GO:0032197">
    <property type="term" value="P:retrotransposition"/>
    <property type="evidence" value="ECO:0000315"/>
    <property type="project" value="MGI"/>
</dbReference>
<dbReference type="GO" id="GO:0007283">
    <property type="term" value="P:spermatogenesis"/>
    <property type="evidence" value="ECO:0000315"/>
    <property type="project" value="MGI"/>
</dbReference>
<dbReference type="GO" id="GO:0141005">
    <property type="term" value="P:transposable element silencing by heterochromatin formation"/>
    <property type="evidence" value="ECO:0000315"/>
    <property type="project" value="MGI"/>
</dbReference>
<dbReference type="CDD" id="cd16931">
    <property type="entry name" value="HATPase_MORC-like"/>
    <property type="match status" value="1"/>
</dbReference>
<dbReference type="FunFam" id="3.30.40.100:FF:000004">
    <property type="entry name" value="MORC family CW-type zinc finger 1"/>
    <property type="match status" value="1"/>
</dbReference>
<dbReference type="FunFam" id="3.30.565.10:FF:000027">
    <property type="entry name" value="MORC family CW-type zinc finger protein 2"/>
    <property type="match status" value="1"/>
</dbReference>
<dbReference type="Gene3D" id="3.30.40.100">
    <property type="match status" value="1"/>
</dbReference>
<dbReference type="Gene3D" id="3.30.565.10">
    <property type="entry name" value="Histidine kinase-like ATPase, C-terminal domain"/>
    <property type="match status" value="1"/>
</dbReference>
<dbReference type="InterPro" id="IPR036890">
    <property type="entry name" value="HATPase_C_sf"/>
</dbReference>
<dbReference type="InterPro" id="IPR041006">
    <property type="entry name" value="Morc_S5"/>
</dbReference>
<dbReference type="InterPro" id="IPR011124">
    <property type="entry name" value="Znf_CW"/>
</dbReference>
<dbReference type="PANTHER" id="PTHR23337:SF6">
    <property type="entry name" value="MORC FAMILY CW-TYPE ZINC FINGER PROTEIN 1"/>
    <property type="match status" value="1"/>
</dbReference>
<dbReference type="PANTHER" id="PTHR23337">
    <property type="entry name" value="ZINC FINGER CW-TYPE COILED-COIL DOMAIN PROTEIN 1"/>
    <property type="match status" value="1"/>
</dbReference>
<dbReference type="Pfam" id="PF13589">
    <property type="entry name" value="HATPase_c_3"/>
    <property type="match status" value="1"/>
</dbReference>
<dbReference type="Pfam" id="PF17942">
    <property type="entry name" value="Morc6_S5"/>
    <property type="match status" value="1"/>
</dbReference>
<dbReference type="Pfam" id="PF07496">
    <property type="entry name" value="zf-CW"/>
    <property type="match status" value="1"/>
</dbReference>
<dbReference type="SUPFAM" id="SSF55874">
    <property type="entry name" value="ATPase domain of HSP90 chaperone/DNA topoisomerase II/histidine kinase"/>
    <property type="match status" value="1"/>
</dbReference>
<dbReference type="PROSITE" id="PS51050">
    <property type="entry name" value="ZF_CW"/>
    <property type="match status" value="1"/>
</dbReference>
<comment type="function">
    <text evidence="4 5">Required for spermatogenesis (PubMed:10369865, PubMed:25503965). Essential for de novo DNA methylation and silencing of transposable elements in the male embryonic germ cells (PubMed:25503965). Not required for piRNA biosynthesis (PubMed:25503965).</text>
</comment>
<comment type="subcellular location">
    <subcellularLocation>
        <location evidence="4 5">Nucleus</location>
    </subcellularLocation>
</comment>
<comment type="tissue specificity">
    <text evidence="4">Expressed at very low level in male germ cells.</text>
</comment>
<comment type="developmental stage">
    <text evidence="5">Detected in embryonic testis at embryonic days 14.5 dpc and peaks at 16.5 dpc.</text>
</comment>
<comment type="disruption phenotype">
    <text evidence="4 5 6">Mice show progressive loss of spermatogonia and male infertility (PubMed:10369865, PubMed:25503965). Spermatogenesis is blocked early in meiosis I (PubMed:10369865, PubMed:25503965). Male germ cells show derepression of transposable elements (TEs) and DNA hypomethylation of TEs (PubMed:25503965). Mice display increased depressive-like behavior whereas no behavioral abnormalities regarding locomotor activity or anxiety-like behavior are detectable and BDNF levels in the hippocampus are up-regulated (PubMed:26275923).</text>
</comment>
<name>MORC1_MOUSE</name>
<proteinExistence type="evidence at transcript level"/>
<accession>Q9WVL5</accession>
<evidence type="ECO:0000255" key="1"/>
<evidence type="ECO:0000255" key="2">
    <source>
        <dbReference type="PROSITE-ProRule" id="PRU00454"/>
    </source>
</evidence>
<evidence type="ECO:0000256" key="3">
    <source>
        <dbReference type="SAM" id="MobiDB-lite"/>
    </source>
</evidence>
<evidence type="ECO:0000269" key="4">
    <source>
    </source>
</evidence>
<evidence type="ECO:0000269" key="5">
    <source>
    </source>
</evidence>
<evidence type="ECO:0000269" key="6">
    <source>
    </source>
</evidence>
<evidence type="ECO:0000312" key="7">
    <source>
        <dbReference type="EMBL" id="AAD43003.1"/>
    </source>
</evidence>
<evidence type="ECO:0000312" key="8">
    <source>
        <dbReference type="EMBL" id="AAH30893.1"/>
    </source>
</evidence>
<evidence type="ECO:0000312" key="9">
    <source>
        <dbReference type="MGI" id="MGI:1316740"/>
    </source>
</evidence>
<reference evidence="7" key="1">
    <citation type="journal article" date="1999" name="Hum. Mol. Genet.">
        <title>New gene family defined by MORC, a nuclear protein required for mouse spermatogenesis.</title>
        <authorList>
            <person name="Inoue N."/>
            <person name="Hess K.D."/>
            <person name="Moreadith R.W."/>
            <person name="Richardson L.L."/>
            <person name="Handel M.A."/>
            <person name="Watson M.L."/>
            <person name="Zinn A.R."/>
        </authorList>
    </citation>
    <scope>NUCLEOTIDE SEQUENCE [MRNA]</scope>
    <scope>FUNCTION</scope>
    <scope>SUBCELLULAR LOCATION</scope>
    <scope>TISSUE SPECIFICITY</scope>
    <scope>DISRUPTION PHENOTYPE</scope>
</reference>
<reference evidence="8" key="2">
    <citation type="journal article" date="2004" name="Genome Res.">
        <title>The status, quality, and expansion of the NIH full-length cDNA project: the Mammalian Gene Collection (MGC).</title>
        <authorList>
            <consortium name="The MGC Project Team"/>
        </authorList>
    </citation>
    <scope>NUCLEOTIDE SEQUENCE [LARGE SCALE MRNA]</scope>
    <source>
        <strain evidence="8">FVB/N</strain>
        <tissue evidence="8">Mammary gland</tissue>
    </source>
</reference>
<reference key="3">
    <citation type="journal article" date="2016" name="Behav. Brain Res.">
        <title>Morc1 knockout evokes a depression-like phenotype in mice.</title>
        <authorList>
            <person name="Schmidt M."/>
            <person name="Brandwein C."/>
            <person name="Luoni A."/>
            <person name="Sandrini P."/>
            <person name="Calzoni T."/>
            <person name="Deuschle M."/>
            <person name="Cirulli F."/>
            <person name="Riva M.A."/>
            <person name="Gass P."/>
        </authorList>
    </citation>
    <scope>DISRUPTION PHENOTYPE</scope>
</reference>
<reference key="4">
    <citation type="journal article" date="2014" name="Nat. Commun.">
        <title>MORC1 represses transposable elements in the mouse male germline.</title>
        <authorList>
            <person name="Pastor W.A."/>
            <person name="Stroud H."/>
            <person name="Nee K."/>
            <person name="Liu W."/>
            <person name="Pezic D."/>
            <person name="Manakov S."/>
            <person name="Lee S.A."/>
            <person name="Moissiard G."/>
            <person name="Zamudio N."/>
            <person name="Bourc'his D."/>
            <person name="Aravin A.A."/>
            <person name="Clark A.T."/>
            <person name="Jacobsen S.E."/>
        </authorList>
    </citation>
    <scope>FUNCTION</scope>
    <scope>SUBCELLULAR LOCATION</scope>
    <scope>DISRUPTION PHENOTYPE</scope>
    <scope>DEVELOPMENTAL STAGE</scope>
</reference>
<gene>
    <name evidence="9" type="primary">Morc1</name>
    <name evidence="7" type="synonym">Morc</name>
</gene>